<evidence type="ECO:0000250" key="1">
    <source>
        <dbReference type="UniProtKB" id="O35179"/>
    </source>
</evidence>
<evidence type="ECO:0000250" key="2">
    <source>
        <dbReference type="UniProtKB" id="O35180"/>
    </source>
</evidence>
<evidence type="ECO:0000250" key="3">
    <source>
        <dbReference type="UniProtKB" id="O35964"/>
    </source>
</evidence>
<evidence type="ECO:0000255" key="4"/>
<evidence type="ECO:0000255" key="5">
    <source>
        <dbReference type="PROSITE-ProRule" id="PRU00192"/>
    </source>
</evidence>
<evidence type="ECO:0000255" key="6">
    <source>
        <dbReference type="PROSITE-ProRule" id="PRU00361"/>
    </source>
</evidence>
<evidence type="ECO:0000269" key="7">
    <source>
    </source>
</evidence>
<evidence type="ECO:0000305" key="8"/>
<evidence type="ECO:0000312" key="9">
    <source>
        <dbReference type="EMBL" id="CAD27937.1"/>
    </source>
</evidence>
<comment type="function">
    <text evidence="2 7">Implicated in endocytosis. May recruit other proteins to membranes with high curvature (By similarity). Implicated in endocytosis of yolk proteins during oogenesis.</text>
</comment>
<comment type="subunit">
    <text evidence="2 7">Interacts with ARC (By similarity). Interacts with SYNJ1 and DNM1.</text>
</comment>
<comment type="subcellular location">
    <subcellularLocation>
        <location evidence="2">Cytoplasm</location>
    </subcellularLocation>
    <subcellularLocation>
        <location evidence="2">Early endosome membrane</location>
        <topology evidence="2">Peripheral membrane protein</topology>
    </subcellularLocation>
    <text evidence="2">Associated with postsynaptic endosomes in hippocampal neurons.</text>
</comment>
<comment type="tissue specificity">
    <text evidence="7">Highest level in a region associated with endocytosis of yolk proteins in developing oocytes (at protein level). Highest level in small ovarian follicles. High levels in brain and testis. Lower level in adrenal glands.</text>
</comment>
<comment type="developmental stage">
    <text evidence="7">Expressed in early stages of follicle development up to large white follicles with highest level in small white follicles.</text>
</comment>
<comment type="domain">
    <text evidence="1">An N-terminal amphipathic helix, the BAR domain and a second amphipathic helix inserted into helix 1 of the BAR domain (N-BAR domain) induce membrane curvature and bind curved membranes.</text>
</comment>
<comment type="disruption phenotype">
    <text evidence="7">Hens express reduced levels of SH3GL3 in ovarian follicles prior to uptake of yolk proteins.</text>
</comment>
<comment type="similarity">
    <text evidence="4">Belongs to the endophilin family.</text>
</comment>
<sequence length="353" mass="40005">MSVAGLKKQFHKASQLFSEKISGAEGTKLDEEFQEMERKIDVTNKAVAELLSKSTEYLQPNPAYRAKLGMLNTMSKIRGQVKTTGYPQTEGLLGDCMIRYGRELGDDSMFGLALLDAGESMKQMAEVKDSLDINVKQNFIDPLQLLQDKDLKEIGHHLKKLEGRRLDYDYKKKRLGKIPDEEVKQAVEKFEESKELAERSMFNFLENDVEQVSQLAVFVEAALDYHKQSTEILEDLQSKLQNRINVASSRPKREFKPKPVITTTLETGDNQQHNGIAYSSSIKSSGSSMHVDQPCCQALYDFEPENEGELGFKEGDIITLTNQIDENWYEGMLNGESGFFPHNYVEVMVPLPQ</sequence>
<protein>
    <recommendedName>
        <fullName>Endophilin-A3</fullName>
    </recommendedName>
    <alternativeName>
        <fullName>Endophilin-3</fullName>
    </alternativeName>
    <alternativeName>
        <fullName>SH3 domain-containing GRB2-like protein 3</fullName>
    </alternativeName>
    <alternativeName>
        <fullName>SH3p13</fullName>
    </alternativeName>
</protein>
<organism>
    <name type="scientific">Gallus gallus</name>
    <name type="common">Chicken</name>
    <dbReference type="NCBI Taxonomy" id="9031"/>
    <lineage>
        <taxon>Eukaryota</taxon>
        <taxon>Metazoa</taxon>
        <taxon>Chordata</taxon>
        <taxon>Craniata</taxon>
        <taxon>Vertebrata</taxon>
        <taxon>Euteleostomi</taxon>
        <taxon>Archelosauria</taxon>
        <taxon>Archosauria</taxon>
        <taxon>Dinosauria</taxon>
        <taxon>Saurischia</taxon>
        <taxon>Theropoda</taxon>
        <taxon>Coelurosauria</taxon>
        <taxon>Aves</taxon>
        <taxon>Neognathae</taxon>
        <taxon>Galloanserae</taxon>
        <taxon>Galliformes</taxon>
        <taxon>Phasianidae</taxon>
        <taxon>Phasianinae</taxon>
        <taxon>Gallus</taxon>
    </lineage>
</organism>
<keyword id="KW-0175">Coiled coil</keyword>
<keyword id="KW-0963">Cytoplasm</keyword>
<keyword id="KW-0254">Endocytosis</keyword>
<keyword id="KW-0967">Endosome</keyword>
<keyword id="KW-0446">Lipid-binding</keyword>
<keyword id="KW-0472">Membrane</keyword>
<keyword id="KW-1185">Reference proteome</keyword>
<keyword id="KW-0728">SH3 domain</keyword>
<gene>
    <name evidence="2" type="primary">SH3GL3</name>
    <name evidence="9" type="synonym">SH3P13</name>
</gene>
<accession>Q8AXU9</accession>
<reference evidence="8 9" key="1">
    <citation type="journal article" date="2003" name="Biol. Reprod.">
        <title>Receptor-mediated chicken oocyte growth: differential expression of endophilin isoforms in developing follicles.</title>
        <authorList>
            <person name="Hirayama S."/>
            <person name="Bajari T.M."/>
            <person name="Nimpf J."/>
            <person name="Schneider W.J."/>
        </authorList>
    </citation>
    <scope>NUCLEOTIDE SEQUENCE [MRNA]</scope>
    <scope>FUNCTION</scope>
    <scope>TISSUE SPECIFICITY</scope>
    <scope>DEVELOPMENTAL STAGE</scope>
    <scope>INTERACTION WITH SYNJ1 AND DNM1</scope>
    <scope>DISRUPTION PHENOTYPE</scope>
    <source>
        <tissue evidence="9">Brain</tissue>
    </source>
</reference>
<proteinExistence type="evidence at protein level"/>
<dbReference type="EMBL" id="AJ439352">
    <property type="protein sequence ID" value="CAD27937.1"/>
    <property type="molecule type" value="mRNA"/>
</dbReference>
<dbReference type="RefSeq" id="NP_989859.1">
    <property type="nucleotide sequence ID" value="NM_204528.1"/>
</dbReference>
<dbReference type="SMR" id="Q8AXU9"/>
<dbReference type="BioGRID" id="675495">
    <property type="interactions" value="4"/>
</dbReference>
<dbReference type="FunCoup" id="Q8AXU9">
    <property type="interactions" value="350"/>
</dbReference>
<dbReference type="STRING" id="9031.ENSGALP00000009724"/>
<dbReference type="PaxDb" id="9031-ENSGALP00000009724"/>
<dbReference type="GeneID" id="395201"/>
<dbReference type="KEGG" id="gga:395201"/>
<dbReference type="CTD" id="6457"/>
<dbReference type="VEuPathDB" id="HostDB:geneid_395201"/>
<dbReference type="eggNOG" id="KOG1118">
    <property type="taxonomic scope" value="Eukaryota"/>
</dbReference>
<dbReference type="InParanoid" id="Q8AXU9"/>
<dbReference type="OrthoDB" id="443981at2759"/>
<dbReference type="PhylomeDB" id="Q8AXU9"/>
<dbReference type="PRO" id="PR:Q8AXU9"/>
<dbReference type="Proteomes" id="UP000000539">
    <property type="component" value="Unassembled WGS sequence"/>
</dbReference>
<dbReference type="GO" id="GO:0005737">
    <property type="term" value="C:cytoplasm"/>
    <property type="evidence" value="ECO:0000318"/>
    <property type="project" value="GO_Central"/>
</dbReference>
<dbReference type="GO" id="GO:0031901">
    <property type="term" value="C:early endosome membrane"/>
    <property type="evidence" value="ECO:0007669"/>
    <property type="project" value="UniProtKB-SubCell"/>
</dbReference>
<dbReference type="GO" id="GO:0098978">
    <property type="term" value="C:glutamatergic synapse"/>
    <property type="evidence" value="ECO:0000318"/>
    <property type="project" value="GO_Central"/>
</dbReference>
<dbReference type="GO" id="GO:0098793">
    <property type="term" value="C:presynapse"/>
    <property type="evidence" value="ECO:0000318"/>
    <property type="project" value="GO_Central"/>
</dbReference>
<dbReference type="GO" id="GO:0008289">
    <property type="term" value="F:lipid binding"/>
    <property type="evidence" value="ECO:0007669"/>
    <property type="project" value="UniProtKB-KW"/>
</dbReference>
<dbReference type="GO" id="GO:0006897">
    <property type="term" value="P:endocytosis"/>
    <property type="evidence" value="ECO:0007669"/>
    <property type="project" value="UniProtKB-KW"/>
</dbReference>
<dbReference type="CDD" id="cd07615">
    <property type="entry name" value="BAR_Endophilin_A3"/>
    <property type="match status" value="1"/>
</dbReference>
<dbReference type="CDD" id="cd11803">
    <property type="entry name" value="SH3_Endophilin_A"/>
    <property type="match status" value="1"/>
</dbReference>
<dbReference type="FunFam" id="2.30.30.40:FF:000053">
    <property type="entry name" value="endophilin-A1 isoform X2"/>
    <property type="match status" value="1"/>
</dbReference>
<dbReference type="FunFam" id="1.20.1270.60:FF:000021">
    <property type="entry name" value="Endophilin-A2 isoform 1"/>
    <property type="match status" value="1"/>
</dbReference>
<dbReference type="Gene3D" id="1.20.1270.60">
    <property type="entry name" value="Arfaptin homology (AH) domain/BAR domain"/>
    <property type="match status" value="1"/>
</dbReference>
<dbReference type="Gene3D" id="2.30.30.40">
    <property type="entry name" value="SH3 Domains"/>
    <property type="match status" value="1"/>
</dbReference>
<dbReference type="InterPro" id="IPR027267">
    <property type="entry name" value="AH/BAR_dom_sf"/>
</dbReference>
<dbReference type="InterPro" id="IPR004148">
    <property type="entry name" value="BAR_dom"/>
</dbReference>
<dbReference type="InterPro" id="IPR032469">
    <property type="entry name" value="Endophilin-A3_BAR"/>
</dbReference>
<dbReference type="InterPro" id="IPR035824">
    <property type="entry name" value="Endophilin_A_SH3"/>
</dbReference>
<dbReference type="InterPro" id="IPR050384">
    <property type="entry name" value="Endophilin_SH3RF"/>
</dbReference>
<dbReference type="InterPro" id="IPR036028">
    <property type="entry name" value="SH3-like_dom_sf"/>
</dbReference>
<dbReference type="InterPro" id="IPR001452">
    <property type="entry name" value="SH3_domain"/>
</dbReference>
<dbReference type="PANTHER" id="PTHR14167:SF45">
    <property type="entry name" value="ENDOPHILIN-A3"/>
    <property type="match status" value="1"/>
</dbReference>
<dbReference type="PANTHER" id="PTHR14167">
    <property type="entry name" value="SH3 DOMAIN-CONTAINING"/>
    <property type="match status" value="1"/>
</dbReference>
<dbReference type="Pfam" id="PF03114">
    <property type="entry name" value="BAR"/>
    <property type="match status" value="1"/>
</dbReference>
<dbReference type="Pfam" id="PF00018">
    <property type="entry name" value="SH3_1"/>
    <property type="match status" value="1"/>
</dbReference>
<dbReference type="PRINTS" id="PR00452">
    <property type="entry name" value="SH3DOMAIN"/>
</dbReference>
<dbReference type="PRINTS" id="PR01887">
    <property type="entry name" value="SPECTRNALPHA"/>
</dbReference>
<dbReference type="SMART" id="SM00721">
    <property type="entry name" value="BAR"/>
    <property type="match status" value="1"/>
</dbReference>
<dbReference type="SMART" id="SM00326">
    <property type="entry name" value="SH3"/>
    <property type="match status" value="1"/>
</dbReference>
<dbReference type="SUPFAM" id="SSF103657">
    <property type="entry name" value="BAR/IMD domain-like"/>
    <property type="match status" value="1"/>
</dbReference>
<dbReference type="SUPFAM" id="SSF50044">
    <property type="entry name" value="SH3-domain"/>
    <property type="match status" value="1"/>
</dbReference>
<dbReference type="PROSITE" id="PS51021">
    <property type="entry name" value="BAR"/>
    <property type="match status" value="1"/>
</dbReference>
<dbReference type="PROSITE" id="PS50002">
    <property type="entry name" value="SH3"/>
    <property type="match status" value="1"/>
</dbReference>
<feature type="chain" id="PRO_0000309488" description="Endophilin-A3">
    <location>
        <begin position="1"/>
        <end position="353"/>
    </location>
</feature>
<feature type="domain" description="BAR" evidence="6">
    <location>
        <begin position="18"/>
        <end position="249"/>
    </location>
</feature>
<feature type="domain" description="SH3" evidence="5">
    <location>
        <begin position="291"/>
        <end position="350"/>
    </location>
</feature>
<feature type="region of interest" description="Membrane-binding amphipathic helix" evidence="1">
    <location>
        <begin position="1"/>
        <end position="21"/>
    </location>
</feature>
<feature type="region of interest" description="Required for dimerization upon membrane association" evidence="1">
    <location>
        <begin position="60"/>
        <end position="87"/>
    </location>
</feature>
<feature type="region of interest" description="Interaction with ARC" evidence="3">
    <location>
        <begin position="218"/>
        <end position="254"/>
    </location>
</feature>
<feature type="coiled-coil region" evidence="4">
    <location>
        <begin position="180"/>
        <end position="201"/>
    </location>
</feature>
<name>SH3G3_CHICK</name>